<protein>
    <recommendedName>
        <fullName>3'(2'),5'-bisphosphate nucleotidase</fullName>
        <ecNumber evidence="1">3.1.3.7</ecNumber>
    </recommendedName>
    <alternativeName>
        <fullName>3'(2'),5-bisphosphonucleoside 3'(2')-phosphohydrolase</fullName>
    </alternativeName>
    <alternativeName>
        <fullName>DPNPase</fullName>
    </alternativeName>
</protein>
<reference key="1">
    <citation type="journal article" date="2005" name="BMC Biol.">
        <title>The sequence of rice chromosomes 11 and 12, rich in disease resistance genes and recent gene duplications.</title>
        <authorList>
            <consortium name="The rice chromosomes 11 and 12 sequencing consortia"/>
        </authorList>
    </citation>
    <scope>NUCLEOTIDE SEQUENCE [LARGE SCALE GENOMIC DNA]</scope>
    <source>
        <strain>cv. Nipponbare</strain>
    </source>
</reference>
<reference key="2">
    <citation type="journal article" date="2005" name="Nature">
        <title>The map-based sequence of the rice genome.</title>
        <authorList>
            <consortium name="International rice genome sequencing project (IRGSP)"/>
        </authorList>
    </citation>
    <scope>NUCLEOTIDE SEQUENCE [LARGE SCALE GENOMIC DNA]</scope>
    <source>
        <strain>cv. Nipponbare</strain>
    </source>
</reference>
<reference key="3">
    <citation type="journal article" date="2008" name="Nucleic Acids Res.">
        <title>The rice annotation project database (RAP-DB): 2008 update.</title>
        <authorList>
            <consortium name="The rice annotation project (RAP)"/>
        </authorList>
    </citation>
    <scope>GENOME REANNOTATION</scope>
    <source>
        <strain>cv. Nipponbare</strain>
    </source>
</reference>
<reference key="4">
    <citation type="journal article" date="2013" name="Rice">
        <title>Improvement of the Oryza sativa Nipponbare reference genome using next generation sequence and optical map data.</title>
        <authorList>
            <person name="Kawahara Y."/>
            <person name="de la Bastide M."/>
            <person name="Hamilton J.P."/>
            <person name="Kanamori H."/>
            <person name="McCombie W.R."/>
            <person name="Ouyang S."/>
            <person name="Schwartz D.C."/>
            <person name="Tanaka T."/>
            <person name="Wu J."/>
            <person name="Zhou S."/>
            <person name="Childs K.L."/>
            <person name="Davidson R.M."/>
            <person name="Lin H."/>
            <person name="Quesada-Ocampo L."/>
            <person name="Vaillancourt B."/>
            <person name="Sakai H."/>
            <person name="Lee S.S."/>
            <person name="Kim J."/>
            <person name="Numa H."/>
            <person name="Itoh T."/>
            <person name="Buell C.R."/>
            <person name="Matsumoto T."/>
        </authorList>
    </citation>
    <scope>GENOME REANNOTATION</scope>
    <source>
        <strain>cv. Nipponbare</strain>
    </source>
</reference>
<reference key="5">
    <citation type="journal article" date="2003" name="Science">
        <title>Collection, mapping, and annotation of over 28,000 cDNA clones from japonica rice.</title>
        <authorList>
            <consortium name="The rice full-length cDNA consortium"/>
        </authorList>
    </citation>
    <scope>NUCLEOTIDE SEQUENCE [LARGE SCALE MRNA] OF 159-358</scope>
    <source>
        <strain>cv. Nipponbare</strain>
    </source>
</reference>
<sequence>MSQAAGNPYAAELAAAKKAVTLAARLCQAVQKDILQSGVQSKADQSPVTVADYGSQILVSLVLKMEAPASSSFSMVAEEDSEELRKEGAEEILENITELVNETIVDDGTYSIYFSKEGILSAIDDGKSEGGPSGRHWVLDPIDGTKGFLRGDQYAIALALLDEGKVVLGVLACPNLSLGSIGNLNGGSSGDQVGALFSATIGCGAEVESLQGSPAQKISVCSIDNPVEASFFESYEGAHSLRDLTGSIAEKLGVQAPPVRIDSQAKYGALARGDGAIYLRFPHKGYREKIWDHAAGSIVVTEAGGLVTDASGNDLDFSKGRFLDLDTGIIATNKQLMPSLLKAVQDAIKEQNQAASPL</sequence>
<feature type="chain" id="PRO_0000142535" description="3'(2'),5'-bisphosphate nucleotidase">
    <location>
        <begin position="1"/>
        <end position="358"/>
    </location>
</feature>
<feature type="active site" description="Proton acceptor" evidence="2">
    <location>
        <position position="52"/>
    </location>
</feature>
<feature type="active site" description="Proton acceptor" evidence="2">
    <location>
        <position position="145"/>
    </location>
</feature>
<feature type="binding site" evidence="2">
    <location>
        <position position="78"/>
    </location>
    <ligand>
        <name>Mg(2+)</name>
        <dbReference type="ChEBI" id="CHEBI:18420"/>
        <label>1</label>
    </ligand>
</feature>
<feature type="binding site" evidence="2">
    <location>
        <position position="78"/>
    </location>
    <ligand>
        <name>Mg(2+)</name>
        <dbReference type="ChEBI" id="CHEBI:18420"/>
        <label>3</label>
    </ligand>
</feature>
<feature type="binding site" evidence="2">
    <location>
        <position position="140"/>
    </location>
    <ligand>
        <name>Mg(2+)</name>
        <dbReference type="ChEBI" id="CHEBI:18420"/>
        <label>1</label>
    </ligand>
</feature>
<feature type="binding site" evidence="2">
    <location>
        <position position="140"/>
    </location>
    <ligand>
        <name>Mg(2+)</name>
        <dbReference type="ChEBI" id="CHEBI:18420"/>
        <label>2</label>
    </ligand>
</feature>
<feature type="binding site" evidence="2">
    <location>
        <position position="142"/>
    </location>
    <ligand>
        <name>Mg(2+)</name>
        <dbReference type="ChEBI" id="CHEBI:18420"/>
        <label>1</label>
    </ligand>
</feature>
<feature type="binding site" evidence="2">
    <location>
        <position position="143"/>
    </location>
    <ligand>
        <name>Mg(2+)</name>
        <dbReference type="ChEBI" id="CHEBI:18420"/>
        <label>2</label>
    </ligand>
</feature>
<feature type="binding site" evidence="2">
    <location>
        <position position="145"/>
    </location>
    <ligand>
        <name>adenosine 3',5'-bisphosphate</name>
        <dbReference type="ChEBI" id="CHEBI:58343"/>
    </ligand>
</feature>
<feature type="binding site" evidence="2">
    <location>
        <position position="239"/>
    </location>
    <ligand>
        <name>adenosine 3',5'-bisphosphate</name>
        <dbReference type="ChEBI" id="CHEBI:58343"/>
    </ligand>
</feature>
<feature type="binding site" evidence="2">
    <location>
        <position position="239"/>
    </location>
    <ligand>
        <name>AMP</name>
        <dbReference type="ChEBI" id="CHEBI:456215"/>
    </ligand>
</feature>
<feature type="binding site" evidence="2">
    <location>
        <position position="263"/>
    </location>
    <ligand>
        <name>adenosine 3',5'-bisphosphate</name>
        <dbReference type="ChEBI" id="CHEBI:58343"/>
    </ligand>
</feature>
<feature type="binding site" evidence="2">
    <location>
        <position position="263"/>
    </location>
    <ligand>
        <name>AMP</name>
        <dbReference type="ChEBI" id="CHEBI:456215"/>
    </ligand>
</feature>
<feature type="binding site" evidence="2">
    <location>
        <position position="266"/>
    </location>
    <ligand>
        <name>adenosine 3',5'-bisphosphate</name>
        <dbReference type="ChEBI" id="CHEBI:58343"/>
    </ligand>
</feature>
<feature type="binding site" evidence="2">
    <location>
        <position position="266"/>
    </location>
    <ligand>
        <name>AMP</name>
        <dbReference type="ChEBI" id="CHEBI:456215"/>
    </ligand>
</feature>
<feature type="binding site" evidence="2">
    <location>
        <position position="280"/>
    </location>
    <ligand>
        <name>adenosine 3',5'-bisphosphate</name>
        <dbReference type="ChEBI" id="CHEBI:58343"/>
    </ligand>
</feature>
<feature type="binding site" evidence="2">
    <location>
        <position position="280"/>
    </location>
    <ligand>
        <name>AMP</name>
        <dbReference type="ChEBI" id="CHEBI:456215"/>
    </ligand>
</feature>
<feature type="binding site" evidence="2">
    <location>
        <position position="292"/>
    </location>
    <ligand>
        <name>adenosine 3',5'-bisphosphate</name>
        <dbReference type="ChEBI" id="CHEBI:58343"/>
    </ligand>
</feature>
<feature type="binding site" evidence="2">
    <location>
        <position position="292"/>
    </location>
    <ligand>
        <name>AMP</name>
        <dbReference type="ChEBI" id="CHEBI:456215"/>
    </ligand>
</feature>
<feature type="binding site" evidence="2">
    <location>
        <position position="292"/>
    </location>
    <ligand>
        <name>Mg(2+)</name>
        <dbReference type="ChEBI" id="CHEBI:18420"/>
        <label>2</label>
    </ligand>
</feature>
<comment type="function">
    <text evidence="1">Phosphatase that converts adenosine 3'-phosphate 5'-phosphosulfate (PAPS) to adenosine 5'-phosphosulfate (APS) and 3'(2')-phosphoadenosine 5'-phosphate (PAP) to AMP. May regulate the flux of sulfur in the sulfur-activation pathway by converting PAPS to APS.</text>
</comment>
<comment type="catalytic activity">
    <reaction evidence="1">
        <text>3'-phosphoadenylyl sulfate + H2O = adenosine 5'-phosphosulfate + phosphate</text>
        <dbReference type="Rhea" id="RHEA:77639"/>
        <dbReference type="ChEBI" id="CHEBI:15377"/>
        <dbReference type="ChEBI" id="CHEBI:43474"/>
        <dbReference type="ChEBI" id="CHEBI:58243"/>
        <dbReference type="ChEBI" id="CHEBI:58339"/>
        <dbReference type="EC" id="3.1.3.7"/>
    </reaction>
    <physiologicalReaction direction="left-to-right" evidence="1">
        <dbReference type="Rhea" id="RHEA:77640"/>
    </physiologicalReaction>
</comment>
<comment type="catalytic activity">
    <reaction evidence="1">
        <text>adenosine 3',5'-bisphosphate + H2O = AMP + phosphate</text>
        <dbReference type="Rhea" id="RHEA:10040"/>
        <dbReference type="ChEBI" id="CHEBI:15377"/>
        <dbReference type="ChEBI" id="CHEBI:43474"/>
        <dbReference type="ChEBI" id="CHEBI:58343"/>
        <dbReference type="ChEBI" id="CHEBI:456215"/>
        <dbReference type="EC" id="3.1.3.7"/>
    </reaction>
    <physiologicalReaction direction="left-to-right" evidence="1">
        <dbReference type="Rhea" id="RHEA:10041"/>
    </physiologicalReaction>
</comment>
<comment type="catalytic activity">
    <reaction evidence="1">
        <text>adenosine 2',5'-bisphosphate + H2O = AMP + phosphate</text>
        <dbReference type="Rhea" id="RHEA:77643"/>
        <dbReference type="ChEBI" id="CHEBI:15377"/>
        <dbReference type="ChEBI" id="CHEBI:43474"/>
        <dbReference type="ChEBI" id="CHEBI:194156"/>
        <dbReference type="ChEBI" id="CHEBI:456215"/>
        <dbReference type="EC" id="3.1.3.7"/>
    </reaction>
    <physiologicalReaction direction="left-to-right" evidence="1">
        <dbReference type="Rhea" id="RHEA:77644"/>
    </physiologicalReaction>
</comment>
<comment type="cofactor">
    <cofactor evidence="1">
        <name>Mg(2+)</name>
        <dbReference type="ChEBI" id="CHEBI:18420"/>
    </cofactor>
</comment>
<comment type="activity regulation">
    <text evidence="1">Inhibited by Ca(2+), Li(+), and Na(+) and activated by K(+).</text>
</comment>
<comment type="similarity">
    <text evidence="3">Belongs to the inositol monophosphatase superfamily.</text>
</comment>
<evidence type="ECO:0000250" key="1">
    <source>
        <dbReference type="UniProtKB" id="P0C5A3"/>
    </source>
</evidence>
<evidence type="ECO:0000250" key="2">
    <source>
        <dbReference type="UniProtKB" id="P32179"/>
    </source>
</evidence>
<evidence type="ECO:0000305" key="3"/>
<gene>
    <name type="ordered locus">Os12g0183300</name>
    <name type="ordered locus">LOC_Os12g08280</name>
</gene>
<dbReference type="EC" id="3.1.3.7" evidence="1"/>
<dbReference type="EMBL" id="DP000011">
    <property type="protein sequence ID" value="ABA95973.1"/>
    <property type="molecule type" value="Genomic_DNA"/>
</dbReference>
<dbReference type="EMBL" id="AP008218">
    <property type="protein sequence ID" value="BAF29345.1"/>
    <property type="molecule type" value="Genomic_DNA"/>
</dbReference>
<dbReference type="EMBL" id="AP014968">
    <property type="status" value="NOT_ANNOTATED_CDS"/>
    <property type="molecule type" value="Genomic_DNA"/>
</dbReference>
<dbReference type="EMBL" id="AK058937">
    <property type="status" value="NOT_ANNOTATED_CDS"/>
    <property type="molecule type" value="mRNA"/>
</dbReference>
<dbReference type="SMR" id="Q2QWT4"/>
<dbReference type="FunCoup" id="Q2QWT4">
    <property type="interactions" value="1710"/>
</dbReference>
<dbReference type="STRING" id="39947.Q2QWT4"/>
<dbReference type="PaxDb" id="39947-Q2QWT4"/>
<dbReference type="KEGG" id="dosa:Os12g0183300"/>
<dbReference type="eggNOG" id="KOG1528">
    <property type="taxonomic scope" value="Eukaryota"/>
</dbReference>
<dbReference type="HOGENOM" id="CLU_033446_3_1_1"/>
<dbReference type="InParanoid" id="Q2QWT4"/>
<dbReference type="Proteomes" id="UP000000763">
    <property type="component" value="Chromosome 12"/>
</dbReference>
<dbReference type="Proteomes" id="UP000059680">
    <property type="component" value="Chromosome 12"/>
</dbReference>
<dbReference type="GO" id="GO:0008441">
    <property type="term" value="F:3'(2'),5'-bisphosphate nucleotidase activity"/>
    <property type="evidence" value="ECO:0000318"/>
    <property type="project" value="GO_Central"/>
</dbReference>
<dbReference type="GO" id="GO:0046872">
    <property type="term" value="F:metal ion binding"/>
    <property type="evidence" value="ECO:0007669"/>
    <property type="project" value="UniProtKB-KW"/>
</dbReference>
<dbReference type="GO" id="GO:0046854">
    <property type="term" value="P:phosphatidylinositol phosphate biosynthetic process"/>
    <property type="evidence" value="ECO:0007669"/>
    <property type="project" value="InterPro"/>
</dbReference>
<dbReference type="GO" id="GO:0000103">
    <property type="term" value="P:sulfate assimilation"/>
    <property type="evidence" value="ECO:0000318"/>
    <property type="project" value="GO_Central"/>
</dbReference>
<dbReference type="CDD" id="cd01517">
    <property type="entry name" value="PAP_phosphatase"/>
    <property type="match status" value="1"/>
</dbReference>
<dbReference type="FunFam" id="3.40.190.80:FF:000003">
    <property type="entry name" value="PAP-specific phosphatase HAL2-like"/>
    <property type="match status" value="1"/>
</dbReference>
<dbReference type="FunFam" id="3.30.540.10:FF:000016">
    <property type="entry name" value="SAL1 phosphatase"/>
    <property type="match status" value="1"/>
</dbReference>
<dbReference type="Gene3D" id="3.40.190.80">
    <property type="match status" value="1"/>
</dbReference>
<dbReference type="Gene3D" id="3.30.540.10">
    <property type="entry name" value="Fructose-1,6-Bisphosphatase, subunit A, domain 1"/>
    <property type="match status" value="1"/>
</dbReference>
<dbReference type="InterPro" id="IPR006239">
    <property type="entry name" value="DPNP"/>
</dbReference>
<dbReference type="InterPro" id="IPR020583">
    <property type="entry name" value="Inositol_monoP_metal-BS"/>
</dbReference>
<dbReference type="InterPro" id="IPR051090">
    <property type="entry name" value="Inositol_monoP_superfamily"/>
</dbReference>
<dbReference type="InterPro" id="IPR000760">
    <property type="entry name" value="Inositol_monophosphatase-like"/>
</dbReference>
<dbReference type="InterPro" id="IPR020550">
    <property type="entry name" value="Inositol_monophosphatase_CS"/>
</dbReference>
<dbReference type="NCBIfam" id="TIGR01330">
    <property type="entry name" value="bisphos_HAL2"/>
    <property type="match status" value="1"/>
</dbReference>
<dbReference type="PANTHER" id="PTHR43200:SF6">
    <property type="entry name" value="3'(2'),5'-BISPHOSPHATE NUCLEOTIDASE"/>
    <property type="match status" value="1"/>
</dbReference>
<dbReference type="PANTHER" id="PTHR43200">
    <property type="entry name" value="PHOSPHATASE"/>
    <property type="match status" value="1"/>
</dbReference>
<dbReference type="Pfam" id="PF00459">
    <property type="entry name" value="Inositol_P"/>
    <property type="match status" value="1"/>
</dbReference>
<dbReference type="PRINTS" id="PR00377">
    <property type="entry name" value="IMPHPHTASES"/>
</dbReference>
<dbReference type="SUPFAM" id="SSF56655">
    <property type="entry name" value="Carbohydrate phosphatase"/>
    <property type="match status" value="1"/>
</dbReference>
<dbReference type="PROSITE" id="PS00629">
    <property type="entry name" value="IMP_1"/>
    <property type="match status" value="1"/>
</dbReference>
<dbReference type="PROSITE" id="PS00630">
    <property type="entry name" value="IMP_2"/>
    <property type="match status" value="1"/>
</dbReference>
<organism>
    <name type="scientific">Oryza sativa subsp. japonica</name>
    <name type="common">Rice</name>
    <dbReference type="NCBI Taxonomy" id="39947"/>
    <lineage>
        <taxon>Eukaryota</taxon>
        <taxon>Viridiplantae</taxon>
        <taxon>Streptophyta</taxon>
        <taxon>Embryophyta</taxon>
        <taxon>Tracheophyta</taxon>
        <taxon>Spermatophyta</taxon>
        <taxon>Magnoliopsida</taxon>
        <taxon>Liliopsida</taxon>
        <taxon>Poales</taxon>
        <taxon>Poaceae</taxon>
        <taxon>BOP clade</taxon>
        <taxon>Oryzoideae</taxon>
        <taxon>Oryzeae</taxon>
        <taxon>Oryzinae</taxon>
        <taxon>Oryza</taxon>
        <taxon>Oryza sativa</taxon>
    </lineage>
</organism>
<name>DPNP_ORYSJ</name>
<proteinExistence type="evidence at transcript level"/>
<accession>Q2QWT4</accession>
<accession>Q40639</accession>
<keyword id="KW-0378">Hydrolase</keyword>
<keyword id="KW-0460">Magnesium</keyword>
<keyword id="KW-0479">Metal-binding</keyword>
<keyword id="KW-1185">Reference proteome</keyword>